<evidence type="ECO:0000255" key="1">
    <source>
        <dbReference type="HAMAP-Rule" id="MF_01496"/>
    </source>
</evidence>
<organism>
    <name type="scientific">Amborella trichopoda</name>
    <dbReference type="NCBI Taxonomy" id="13333"/>
    <lineage>
        <taxon>Eukaryota</taxon>
        <taxon>Viridiplantae</taxon>
        <taxon>Streptophyta</taxon>
        <taxon>Embryophyta</taxon>
        <taxon>Tracheophyta</taxon>
        <taxon>Spermatophyta</taxon>
        <taxon>Magnoliopsida</taxon>
        <taxon>Amborellales</taxon>
        <taxon>Amborellaceae</taxon>
        <taxon>Amborella</taxon>
    </lineage>
</organism>
<dbReference type="EMBL" id="AJ506156">
    <property type="protein sequence ID" value="CAD45103.1"/>
    <property type="molecule type" value="Genomic_DNA"/>
</dbReference>
<dbReference type="RefSeq" id="NP_904095.1">
    <property type="nucleotide sequence ID" value="NC_005086.1"/>
</dbReference>
<dbReference type="SMR" id="Q70Y07"/>
<dbReference type="STRING" id="13333.Q70Y07"/>
<dbReference type="GeneID" id="2546587"/>
<dbReference type="KEGG" id="atr:2546587"/>
<dbReference type="OrthoDB" id="1926060at2759"/>
<dbReference type="Proteomes" id="UP000017836">
    <property type="component" value="Chloroplast"/>
</dbReference>
<dbReference type="GO" id="GO:0009535">
    <property type="term" value="C:chloroplast thylakoid membrane"/>
    <property type="evidence" value="ECO:0007669"/>
    <property type="project" value="UniProtKB-SubCell"/>
</dbReference>
<dbReference type="GO" id="GO:0009523">
    <property type="term" value="C:photosystem II"/>
    <property type="evidence" value="ECO:0007669"/>
    <property type="project" value="UniProtKB-KW"/>
</dbReference>
<dbReference type="GO" id="GO:0016168">
    <property type="term" value="F:chlorophyll binding"/>
    <property type="evidence" value="ECO:0007669"/>
    <property type="project" value="UniProtKB-UniRule"/>
</dbReference>
<dbReference type="GO" id="GO:0045156">
    <property type="term" value="F:electron transporter, transferring electrons within the cyclic electron transport pathway of photosynthesis activity"/>
    <property type="evidence" value="ECO:0007669"/>
    <property type="project" value="InterPro"/>
</dbReference>
<dbReference type="GO" id="GO:0046872">
    <property type="term" value="F:metal ion binding"/>
    <property type="evidence" value="ECO:0007669"/>
    <property type="project" value="UniProtKB-KW"/>
</dbReference>
<dbReference type="GO" id="GO:0009772">
    <property type="term" value="P:photosynthetic electron transport in photosystem II"/>
    <property type="evidence" value="ECO:0007669"/>
    <property type="project" value="InterPro"/>
</dbReference>
<dbReference type="FunFam" id="1.10.10.670:FF:000001">
    <property type="entry name" value="Photosystem II CP43 reaction center protein"/>
    <property type="match status" value="1"/>
</dbReference>
<dbReference type="Gene3D" id="1.10.10.670">
    <property type="entry name" value="photosystem ii from thermosynechococcus elongatus"/>
    <property type="match status" value="1"/>
</dbReference>
<dbReference type="HAMAP" id="MF_01496">
    <property type="entry name" value="PSII_PsbC_CP43"/>
    <property type="match status" value="1"/>
</dbReference>
<dbReference type="InterPro" id="IPR000932">
    <property type="entry name" value="PS_antenna-like"/>
</dbReference>
<dbReference type="InterPro" id="IPR036001">
    <property type="entry name" value="PS_II_antenna-like_sf"/>
</dbReference>
<dbReference type="InterPro" id="IPR005869">
    <property type="entry name" value="PSII_PsbC"/>
</dbReference>
<dbReference type="InterPro" id="IPR044900">
    <property type="entry name" value="PSII_PsbC_sf"/>
</dbReference>
<dbReference type="NCBIfam" id="TIGR01153">
    <property type="entry name" value="psbC"/>
    <property type="match status" value="1"/>
</dbReference>
<dbReference type="Pfam" id="PF00421">
    <property type="entry name" value="PSII"/>
    <property type="match status" value="1"/>
</dbReference>
<dbReference type="SUPFAM" id="SSF161077">
    <property type="entry name" value="Photosystem II antenna protein-like"/>
    <property type="match status" value="1"/>
</dbReference>
<comment type="function">
    <text evidence="1">One of the components of the core complex of photosystem II (PSII). It binds chlorophyll and helps catalyze the primary light-induced photochemical processes of PSII. PSII is a light-driven water:plastoquinone oxidoreductase, using light energy to abstract electrons from H(2)O, generating O(2) and a proton gradient subsequently used for ATP formation.</text>
</comment>
<comment type="cofactor">
    <text evidence="1">Binds multiple chlorophylls and provides some of the ligands for the Ca-4Mn-5O cluster of the oxygen-evolving complex. It may also provide a ligand for a Cl- that is required for oxygen evolution. PSII binds additional chlorophylls, carotenoids and specific lipids.</text>
</comment>
<comment type="subunit">
    <text evidence="1">PSII is composed of 1 copy each of membrane proteins PsbA, PsbB, PsbC, PsbD, PsbE, PsbF, PsbH, PsbI, PsbJ, PsbK, PsbL, PsbM, PsbT, PsbX, PsbY, PsbZ, Psb30/Ycf12, at least 3 peripheral proteins of the oxygen-evolving complex and a large number of cofactors. It forms dimeric complexes.</text>
</comment>
<comment type="subcellular location">
    <subcellularLocation>
        <location evidence="1">Plastid</location>
        <location evidence="1">Chloroplast thylakoid membrane</location>
        <topology evidence="1">Multi-pass membrane protein</topology>
    </subcellularLocation>
</comment>
<comment type="similarity">
    <text evidence="1">Belongs to the PsbB/PsbC family. PsbC subfamily.</text>
</comment>
<feature type="propeptide" id="PRO_0000431109" evidence="1">
    <location>
        <begin position="1"/>
        <end position="14"/>
    </location>
</feature>
<feature type="chain" id="PRO_0000361316" description="Photosystem II CP43 reaction center protein" evidence="1">
    <location>
        <begin position="15"/>
        <end position="473"/>
    </location>
</feature>
<feature type="transmembrane region" description="Helical" evidence="1">
    <location>
        <begin position="69"/>
        <end position="93"/>
    </location>
</feature>
<feature type="transmembrane region" description="Helical" evidence="1">
    <location>
        <begin position="134"/>
        <end position="155"/>
    </location>
</feature>
<feature type="transmembrane region" description="Helical" evidence="1">
    <location>
        <begin position="178"/>
        <end position="200"/>
    </location>
</feature>
<feature type="transmembrane region" description="Helical" evidence="1">
    <location>
        <begin position="255"/>
        <end position="275"/>
    </location>
</feature>
<feature type="transmembrane region" description="Helical" evidence="1">
    <location>
        <begin position="291"/>
        <end position="312"/>
    </location>
</feature>
<feature type="transmembrane region" description="Helical" evidence="1">
    <location>
        <begin position="447"/>
        <end position="471"/>
    </location>
</feature>
<feature type="binding site" evidence="1">
    <location>
        <position position="367"/>
    </location>
    <ligand>
        <name>[CaMn4O5] cluster</name>
        <dbReference type="ChEBI" id="CHEBI:189552"/>
    </ligand>
</feature>
<feature type="modified residue" description="N-acetylthreonine" evidence="1">
    <location>
        <position position="15"/>
    </location>
</feature>
<feature type="modified residue" description="Phosphothreonine" evidence="1">
    <location>
        <position position="15"/>
    </location>
</feature>
<gene>
    <name evidence="1" type="primary">psbC</name>
</gene>
<geneLocation type="chloroplast"/>
<keyword id="KW-0007">Acetylation</keyword>
<keyword id="KW-0148">Chlorophyll</keyword>
<keyword id="KW-0150">Chloroplast</keyword>
<keyword id="KW-0157">Chromophore</keyword>
<keyword id="KW-0464">Manganese</keyword>
<keyword id="KW-0472">Membrane</keyword>
<keyword id="KW-0479">Metal-binding</keyword>
<keyword id="KW-0597">Phosphoprotein</keyword>
<keyword id="KW-0602">Photosynthesis</keyword>
<keyword id="KW-0604">Photosystem II</keyword>
<keyword id="KW-0934">Plastid</keyword>
<keyword id="KW-1185">Reference proteome</keyword>
<keyword id="KW-0793">Thylakoid</keyword>
<keyword id="KW-0812">Transmembrane</keyword>
<keyword id="KW-1133">Transmembrane helix</keyword>
<sequence>MKTLYSLRRFYPVETLFNGTLALAGRDQETTGFAWWAGNARLINLSGKLLGAHVAHAGLIVFWAGAMNLFEVAHFVPEKPMYEQGLILLPHLATLGWGVGPGGEVIDTFPYFVSGVLHLISSAVLGFGGIYHALLGPETLEESFPFFGYVWKDRNKMTTILGIHLILLGVGAFLLVFKALYFGGVYDTWAPGGGDVRKITNLTLSPSVIFGYLLKSPFGGEGWIVSVDDLEDIIGGHVWLGFICILGGIWHILTKPFAWARRAFVWSGEAYLSYSLGALSIFGFIACCFVWFNNTAYPSEFYGPTGPEASQAQAFTFLVRDQRLGANVGSAQGPTGLGKYLMRSPTGEVIFGGETMRFWDLRAPWLEPLRGPNGLDLSRLKKDIQPWQERRSAEYMTHAPLGSLNSVGGVATEINAVNYVSPRSWLATSHFVLGFFLFVGHLWHAGRARAAAAGFEKGIDRDFEPVLSMTPLN</sequence>
<accession>Q70Y07</accession>
<name>PSBC_AMBTC</name>
<proteinExistence type="inferred from homology"/>
<protein>
    <recommendedName>
        <fullName evidence="1">Photosystem II CP43 reaction center protein</fullName>
    </recommendedName>
    <alternativeName>
        <fullName evidence="1">PSII 43 kDa protein</fullName>
    </alternativeName>
    <alternativeName>
        <fullName evidence="1">Protein CP-43</fullName>
    </alternativeName>
</protein>
<reference key="1">
    <citation type="journal article" date="2003" name="Mol. Biol. Evol.">
        <title>Analysis of the Amborella trichopoda chloroplast genome sequence suggests that Amborella is not a basal angiosperm.</title>
        <authorList>
            <person name="Goremykin V.V."/>
            <person name="Hirsch-Ernst K.I."/>
            <person name="Wolfl S."/>
            <person name="Hellwig F.H."/>
        </authorList>
    </citation>
    <scope>NUCLEOTIDE SEQUENCE [LARGE SCALE GENOMIC DNA]</scope>
</reference>